<keyword id="KW-0997">Cell inner membrane</keyword>
<keyword id="KW-1003">Cell membrane</keyword>
<keyword id="KW-0407">Ion channel</keyword>
<keyword id="KW-0406">Ion transport</keyword>
<keyword id="KW-0472">Membrane</keyword>
<keyword id="KW-0479">Metal-binding</keyword>
<keyword id="KW-1185">Reference proteome</keyword>
<keyword id="KW-0915">Sodium</keyword>
<keyword id="KW-0812">Transmembrane</keyword>
<keyword id="KW-1133">Transmembrane helix</keyword>
<keyword id="KW-0813">Transport</keyword>
<gene>
    <name evidence="1" type="primary">fluC</name>
    <name evidence="1" type="synonym">crcB</name>
    <name type="ordered locus">PM1630</name>
</gene>
<reference key="1">
    <citation type="journal article" date="2001" name="Proc. Natl. Acad. Sci. U.S.A.">
        <title>Complete genomic sequence of Pasteurella multocida Pm70.</title>
        <authorList>
            <person name="May B.J."/>
            <person name="Zhang Q."/>
            <person name="Li L.L."/>
            <person name="Paustian M.L."/>
            <person name="Whittam T.S."/>
            <person name="Kapur V."/>
        </authorList>
    </citation>
    <scope>NUCLEOTIDE SEQUENCE [LARGE SCALE GENOMIC DNA]</scope>
    <source>
        <strain>Pm70</strain>
    </source>
</reference>
<sequence>MISVGQQIIFISSGAALGALSRWGLGLLLNPLFSAFSLGTLVANYLGCLIIGVFLAFFWQYPQCSAEWRLFFVTGFLGSLTTFSTFSAEVIENLIQQKWLAGLMLASGHLLGCLLFTALGVFIWRYWQ</sequence>
<dbReference type="EMBL" id="AE004439">
    <property type="protein sequence ID" value="AAK03714.1"/>
    <property type="status" value="ALT_INIT"/>
    <property type="molecule type" value="Genomic_DNA"/>
</dbReference>
<dbReference type="SMR" id="Q9CKI7"/>
<dbReference type="EnsemblBacteria" id="AAK03714">
    <property type="protein sequence ID" value="AAK03714"/>
    <property type="gene ID" value="PM1630"/>
</dbReference>
<dbReference type="KEGG" id="pmu:PM1630"/>
<dbReference type="HOGENOM" id="CLU_114342_3_3_6"/>
<dbReference type="OrthoDB" id="9806299at2"/>
<dbReference type="Proteomes" id="UP000000809">
    <property type="component" value="Chromosome"/>
</dbReference>
<dbReference type="GO" id="GO:0005886">
    <property type="term" value="C:plasma membrane"/>
    <property type="evidence" value="ECO:0007669"/>
    <property type="project" value="UniProtKB-SubCell"/>
</dbReference>
<dbReference type="GO" id="GO:0062054">
    <property type="term" value="F:fluoride channel activity"/>
    <property type="evidence" value="ECO:0007669"/>
    <property type="project" value="UniProtKB-UniRule"/>
</dbReference>
<dbReference type="GO" id="GO:0046872">
    <property type="term" value="F:metal ion binding"/>
    <property type="evidence" value="ECO:0007669"/>
    <property type="project" value="UniProtKB-KW"/>
</dbReference>
<dbReference type="GO" id="GO:0140114">
    <property type="term" value="P:cellular detoxification of fluoride"/>
    <property type="evidence" value="ECO:0007669"/>
    <property type="project" value="UniProtKB-UniRule"/>
</dbReference>
<dbReference type="HAMAP" id="MF_00454">
    <property type="entry name" value="FluC"/>
    <property type="match status" value="1"/>
</dbReference>
<dbReference type="InterPro" id="IPR003691">
    <property type="entry name" value="FluC"/>
</dbReference>
<dbReference type="NCBIfam" id="TIGR00494">
    <property type="entry name" value="crcB"/>
    <property type="match status" value="1"/>
</dbReference>
<dbReference type="NCBIfam" id="NF010792">
    <property type="entry name" value="PRK14196.1"/>
    <property type="match status" value="1"/>
</dbReference>
<dbReference type="PANTHER" id="PTHR28259">
    <property type="entry name" value="FLUORIDE EXPORT PROTEIN 1-RELATED"/>
    <property type="match status" value="1"/>
</dbReference>
<dbReference type="PANTHER" id="PTHR28259:SF1">
    <property type="entry name" value="FLUORIDE EXPORT PROTEIN 1-RELATED"/>
    <property type="match status" value="1"/>
</dbReference>
<dbReference type="Pfam" id="PF02537">
    <property type="entry name" value="CRCB"/>
    <property type="match status" value="1"/>
</dbReference>
<comment type="function">
    <text evidence="1">Fluoride-specific ion channel. Important for reducing fluoride concentration in the cell, thus reducing its toxicity.</text>
</comment>
<comment type="catalytic activity">
    <reaction evidence="1">
        <text>fluoride(in) = fluoride(out)</text>
        <dbReference type="Rhea" id="RHEA:76159"/>
        <dbReference type="ChEBI" id="CHEBI:17051"/>
    </reaction>
    <physiologicalReaction direction="left-to-right" evidence="1">
        <dbReference type="Rhea" id="RHEA:76160"/>
    </physiologicalReaction>
</comment>
<comment type="activity regulation">
    <text evidence="1">Na(+) is not transported, but it plays an essential structural role and its presence is essential for fluoride channel function.</text>
</comment>
<comment type="subcellular location">
    <subcellularLocation>
        <location evidence="1">Cell inner membrane</location>
        <topology evidence="1">Multi-pass membrane protein</topology>
    </subcellularLocation>
</comment>
<comment type="similarity">
    <text evidence="1">Belongs to the fluoride channel Fluc/FEX (TC 1.A.43) family.</text>
</comment>
<comment type="sequence caution" evidence="2">
    <conflict type="erroneous initiation">
        <sequence resource="EMBL-CDS" id="AAK03714"/>
    </conflict>
</comment>
<protein>
    <recommendedName>
        <fullName evidence="1">Fluoride-specific ion channel FluC</fullName>
    </recommendedName>
</protein>
<name>FLUC_PASMU</name>
<evidence type="ECO:0000255" key="1">
    <source>
        <dbReference type="HAMAP-Rule" id="MF_00454"/>
    </source>
</evidence>
<evidence type="ECO:0000305" key="2"/>
<feature type="chain" id="PRO_0000110146" description="Fluoride-specific ion channel FluC">
    <location>
        <begin position="1"/>
        <end position="128"/>
    </location>
</feature>
<feature type="transmembrane region" description="Helical" evidence="1">
    <location>
        <begin position="8"/>
        <end position="28"/>
    </location>
</feature>
<feature type="transmembrane region" description="Helical" evidence="1">
    <location>
        <begin position="38"/>
        <end position="58"/>
    </location>
</feature>
<feature type="transmembrane region" description="Helical" evidence="1">
    <location>
        <begin position="71"/>
        <end position="91"/>
    </location>
</feature>
<feature type="transmembrane region" description="Helical" evidence="1">
    <location>
        <begin position="103"/>
        <end position="123"/>
    </location>
</feature>
<feature type="binding site" evidence="1">
    <location>
        <position position="78"/>
    </location>
    <ligand>
        <name>Na(+)</name>
        <dbReference type="ChEBI" id="CHEBI:29101"/>
        <note>structural</note>
    </ligand>
</feature>
<feature type="binding site" evidence="1">
    <location>
        <position position="81"/>
    </location>
    <ligand>
        <name>Na(+)</name>
        <dbReference type="ChEBI" id="CHEBI:29101"/>
        <note>structural</note>
    </ligand>
</feature>
<proteinExistence type="inferred from homology"/>
<organism>
    <name type="scientific">Pasteurella multocida (strain Pm70)</name>
    <dbReference type="NCBI Taxonomy" id="272843"/>
    <lineage>
        <taxon>Bacteria</taxon>
        <taxon>Pseudomonadati</taxon>
        <taxon>Pseudomonadota</taxon>
        <taxon>Gammaproteobacteria</taxon>
        <taxon>Pasteurellales</taxon>
        <taxon>Pasteurellaceae</taxon>
        <taxon>Pasteurella</taxon>
    </lineage>
</organism>
<accession>Q9CKI7</accession>